<reference key="1">
    <citation type="submission" date="2008-08" db="EMBL/GenBank/DDBJ databases">
        <title>Complete sequence of Vibrio fischeri strain MJ11.</title>
        <authorList>
            <person name="Mandel M.J."/>
            <person name="Stabb E.V."/>
            <person name="Ruby E.G."/>
            <person name="Ferriera S."/>
            <person name="Johnson J."/>
            <person name="Kravitz S."/>
            <person name="Beeson K."/>
            <person name="Sutton G."/>
            <person name="Rogers Y.-H."/>
            <person name="Friedman R."/>
            <person name="Frazier M."/>
            <person name="Venter J.C."/>
        </authorList>
    </citation>
    <scope>NUCLEOTIDE SEQUENCE [LARGE SCALE GENOMIC DNA]</scope>
    <source>
        <strain>MJ11</strain>
    </source>
</reference>
<dbReference type="EC" id="3.1.-.-" evidence="1"/>
<dbReference type="EMBL" id="CP001139">
    <property type="protein sequence ID" value="ACH66473.1"/>
    <property type="molecule type" value="Genomic_DNA"/>
</dbReference>
<dbReference type="RefSeq" id="WP_012533754.1">
    <property type="nucleotide sequence ID" value="NC_011184.1"/>
</dbReference>
<dbReference type="SMR" id="B5F9S6"/>
<dbReference type="KEGG" id="vfm:VFMJ11_0433"/>
<dbReference type="HOGENOM" id="CLU_098240_3_0_6"/>
<dbReference type="Proteomes" id="UP000001857">
    <property type="component" value="Chromosome I"/>
</dbReference>
<dbReference type="GO" id="GO:0005829">
    <property type="term" value="C:cytosol"/>
    <property type="evidence" value="ECO:0007669"/>
    <property type="project" value="TreeGrafter"/>
</dbReference>
<dbReference type="GO" id="GO:0004518">
    <property type="term" value="F:nuclease activity"/>
    <property type="evidence" value="ECO:0007669"/>
    <property type="project" value="UniProtKB-KW"/>
</dbReference>
<dbReference type="GO" id="GO:0000967">
    <property type="term" value="P:rRNA 5'-end processing"/>
    <property type="evidence" value="ECO:0007669"/>
    <property type="project" value="UniProtKB-UniRule"/>
</dbReference>
<dbReference type="CDD" id="cd16964">
    <property type="entry name" value="YqgF"/>
    <property type="match status" value="1"/>
</dbReference>
<dbReference type="FunFam" id="3.30.420.140:FF:000002">
    <property type="entry name" value="Putative pre-16S rRNA nuclease"/>
    <property type="match status" value="1"/>
</dbReference>
<dbReference type="Gene3D" id="3.30.420.140">
    <property type="entry name" value="YqgF/RNase H-like domain"/>
    <property type="match status" value="1"/>
</dbReference>
<dbReference type="HAMAP" id="MF_00651">
    <property type="entry name" value="Nuclease_YqgF"/>
    <property type="match status" value="1"/>
</dbReference>
<dbReference type="InterPro" id="IPR012337">
    <property type="entry name" value="RNaseH-like_sf"/>
</dbReference>
<dbReference type="InterPro" id="IPR005227">
    <property type="entry name" value="YqgF"/>
</dbReference>
<dbReference type="InterPro" id="IPR006641">
    <property type="entry name" value="YqgF/RNaseH-like_dom"/>
</dbReference>
<dbReference type="InterPro" id="IPR037027">
    <property type="entry name" value="YqgF/RNaseH-like_dom_sf"/>
</dbReference>
<dbReference type="NCBIfam" id="TIGR00250">
    <property type="entry name" value="RNAse_H_YqgF"/>
    <property type="match status" value="1"/>
</dbReference>
<dbReference type="PANTHER" id="PTHR33317">
    <property type="entry name" value="POLYNUCLEOTIDYL TRANSFERASE, RIBONUCLEASE H-LIKE SUPERFAMILY PROTEIN"/>
    <property type="match status" value="1"/>
</dbReference>
<dbReference type="PANTHER" id="PTHR33317:SF4">
    <property type="entry name" value="POLYNUCLEOTIDYL TRANSFERASE, RIBONUCLEASE H-LIKE SUPERFAMILY PROTEIN"/>
    <property type="match status" value="1"/>
</dbReference>
<dbReference type="Pfam" id="PF03652">
    <property type="entry name" value="RuvX"/>
    <property type="match status" value="1"/>
</dbReference>
<dbReference type="SMART" id="SM00732">
    <property type="entry name" value="YqgFc"/>
    <property type="match status" value="1"/>
</dbReference>
<dbReference type="SUPFAM" id="SSF53098">
    <property type="entry name" value="Ribonuclease H-like"/>
    <property type="match status" value="1"/>
</dbReference>
<accession>B5F9S6</accession>
<protein>
    <recommendedName>
        <fullName evidence="1">Putative pre-16S rRNA nuclease</fullName>
        <ecNumber evidence="1">3.1.-.-</ecNumber>
    </recommendedName>
</protein>
<organism>
    <name type="scientific">Aliivibrio fischeri (strain MJ11)</name>
    <name type="common">Vibrio fischeri</name>
    <dbReference type="NCBI Taxonomy" id="388396"/>
    <lineage>
        <taxon>Bacteria</taxon>
        <taxon>Pseudomonadati</taxon>
        <taxon>Pseudomonadota</taxon>
        <taxon>Gammaproteobacteria</taxon>
        <taxon>Vibrionales</taxon>
        <taxon>Vibrionaceae</taxon>
        <taxon>Aliivibrio</taxon>
    </lineage>
</organism>
<feature type="chain" id="PRO_1000131085" description="Putative pre-16S rRNA nuclease">
    <location>
        <begin position="1"/>
        <end position="141"/>
    </location>
</feature>
<gene>
    <name type="ordered locus">VFMJ11_0433</name>
</gene>
<name>YQGF_ALIFM</name>
<comment type="function">
    <text evidence="1">Could be a nuclease involved in processing of the 5'-end of pre-16S rRNA.</text>
</comment>
<comment type="subcellular location">
    <subcellularLocation>
        <location evidence="1">Cytoplasm</location>
    </subcellularLocation>
</comment>
<comment type="similarity">
    <text evidence="1">Belongs to the YqgF nuclease family.</text>
</comment>
<proteinExistence type="inferred from homology"/>
<evidence type="ECO:0000255" key="1">
    <source>
        <dbReference type="HAMAP-Rule" id="MF_00651"/>
    </source>
</evidence>
<keyword id="KW-0963">Cytoplasm</keyword>
<keyword id="KW-0378">Hydrolase</keyword>
<keyword id="KW-0540">Nuclease</keyword>
<keyword id="KW-0690">Ribosome biogenesis</keyword>
<sequence length="141" mass="15685">MSSRTIMAFDFGTKSIGSAIGQEITGTASPLKAFKAQDGTPNWDDIEKQIKEWNPDLIVVGLPTDLHGKELDTITPRAKKFANRLHGRFGKQVELHDERLSTAEARADLFEFGGYKALSKGNIDCQSAVVILESWFENQWS</sequence>